<gene>
    <name evidence="1" type="primary">pdxS</name>
    <name type="ordered locus">Ta0522</name>
</gene>
<protein>
    <recommendedName>
        <fullName evidence="1">Pyridoxal 5'-phosphate synthase subunit PdxS</fullName>
        <shortName evidence="1">PLP synthase subunit PdxS</shortName>
        <ecNumber evidence="1">4.3.3.6</ecNumber>
    </recommendedName>
    <alternativeName>
        <fullName evidence="1">Pdx1</fullName>
    </alternativeName>
</protein>
<organism>
    <name type="scientific">Thermoplasma acidophilum (strain ATCC 25905 / DSM 1728 / JCM 9062 / NBRC 15155 / AMRC-C165)</name>
    <dbReference type="NCBI Taxonomy" id="273075"/>
    <lineage>
        <taxon>Archaea</taxon>
        <taxon>Methanobacteriati</taxon>
        <taxon>Thermoplasmatota</taxon>
        <taxon>Thermoplasmata</taxon>
        <taxon>Thermoplasmatales</taxon>
        <taxon>Thermoplasmataceae</taxon>
        <taxon>Thermoplasma</taxon>
    </lineage>
</organism>
<proteinExistence type="inferred from homology"/>
<sequence>MTLDLNKLRFGSELIKRGFSAMTKGGVIMDVTTADQAKIAEAAGAVAVMALERVPADIRAAGGVARMADPMKIKEIMDAVSIPVMAKVRIGHISEAYVLEKIGVDMLDESEVLTPADPFFHLYKKNLTVPVVSGARNLPEAVRRIFEGAAMIRTKGEAGTGNIIEAVRHIRKVNEEISVLKRMSDEQLRAVASNISASYFVLREEASKDLMGVEGKLSYDSAYAGMGRSRIEREILAILRQIRRMGRLPVVNFAAGGVATPADGALMMELGADGVFVGSGIFKSPNPEKMARSIVEAVENYRDYDVVEKASEGLQGMPGVDIESIPKDMRLQERGW</sequence>
<name>PDXS_THEAC</name>
<reference key="1">
    <citation type="journal article" date="2000" name="Nature">
        <title>The genome sequence of the thermoacidophilic scavenger Thermoplasma acidophilum.</title>
        <authorList>
            <person name="Ruepp A."/>
            <person name="Graml W."/>
            <person name="Santos-Martinez M.-L."/>
            <person name="Koretke K.K."/>
            <person name="Volker C."/>
            <person name="Mewes H.-W."/>
            <person name="Frishman D."/>
            <person name="Stocker S."/>
            <person name="Lupas A.N."/>
            <person name="Baumeister W."/>
        </authorList>
    </citation>
    <scope>NUCLEOTIDE SEQUENCE [LARGE SCALE GENOMIC DNA]</scope>
    <source>
        <strain>ATCC 25905 / DSM 1728 / JCM 9062 / NBRC 15155 / AMRC-C165</strain>
    </source>
</reference>
<accession>Q9HKS5</accession>
<comment type="function">
    <text evidence="1">Catalyzes the formation of pyridoxal 5'-phosphate from ribose 5-phosphate (RBP), glyceraldehyde 3-phosphate (G3P) and ammonia. The ammonia is provided by the PdxT subunit. Can also use ribulose 5-phosphate and dihydroxyacetone phosphate as substrates, resulting from enzyme-catalyzed isomerization of RBP and G3P, respectively.</text>
</comment>
<comment type="catalytic activity">
    <reaction evidence="1">
        <text>aldehydo-D-ribose 5-phosphate + D-glyceraldehyde 3-phosphate + L-glutamine = pyridoxal 5'-phosphate + L-glutamate + phosphate + 3 H2O + H(+)</text>
        <dbReference type="Rhea" id="RHEA:31507"/>
        <dbReference type="ChEBI" id="CHEBI:15377"/>
        <dbReference type="ChEBI" id="CHEBI:15378"/>
        <dbReference type="ChEBI" id="CHEBI:29985"/>
        <dbReference type="ChEBI" id="CHEBI:43474"/>
        <dbReference type="ChEBI" id="CHEBI:58273"/>
        <dbReference type="ChEBI" id="CHEBI:58359"/>
        <dbReference type="ChEBI" id="CHEBI:59776"/>
        <dbReference type="ChEBI" id="CHEBI:597326"/>
        <dbReference type="EC" id="4.3.3.6"/>
    </reaction>
</comment>
<comment type="pathway">
    <text evidence="1">Cofactor biosynthesis; pyridoxal 5'-phosphate biosynthesis.</text>
</comment>
<comment type="subunit">
    <text evidence="1">In the presence of PdxT, forms a dodecamer of heterodimers.</text>
</comment>
<comment type="similarity">
    <text evidence="1">Belongs to the PdxS/SNZ family.</text>
</comment>
<evidence type="ECO:0000255" key="1">
    <source>
        <dbReference type="HAMAP-Rule" id="MF_01824"/>
    </source>
</evidence>
<feature type="chain" id="PRO_0000109450" description="Pyridoxal 5'-phosphate synthase subunit PdxS">
    <location>
        <begin position="1"/>
        <end position="336"/>
    </location>
</feature>
<feature type="active site" description="Schiff-base intermediate with D-ribose 5-phosphate" evidence="1">
    <location>
        <position position="87"/>
    </location>
</feature>
<feature type="binding site" evidence="1">
    <location>
        <position position="30"/>
    </location>
    <ligand>
        <name>D-ribose 5-phosphate</name>
        <dbReference type="ChEBI" id="CHEBI:78346"/>
    </ligand>
</feature>
<feature type="binding site" evidence="1">
    <location>
        <position position="159"/>
    </location>
    <ligand>
        <name>D-ribose 5-phosphate</name>
        <dbReference type="ChEBI" id="CHEBI:78346"/>
    </ligand>
</feature>
<feature type="binding site" evidence="1">
    <location>
        <position position="171"/>
    </location>
    <ligand>
        <name>D-glyceraldehyde 3-phosphate</name>
        <dbReference type="ChEBI" id="CHEBI:59776"/>
    </ligand>
</feature>
<feature type="binding site" evidence="1">
    <location>
        <position position="257"/>
    </location>
    <ligand>
        <name>D-ribose 5-phosphate</name>
        <dbReference type="ChEBI" id="CHEBI:78346"/>
    </ligand>
</feature>
<feature type="binding site" evidence="1">
    <location>
        <begin position="278"/>
        <end position="279"/>
    </location>
    <ligand>
        <name>D-ribose 5-phosphate</name>
        <dbReference type="ChEBI" id="CHEBI:78346"/>
    </ligand>
</feature>
<dbReference type="EC" id="4.3.3.6" evidence="1"/>
<dbReference type="EMBL" id="AL445064">
    <property type="protein sequence ID" value="CAC11661.1"/>
    <property type="molecule type" value="Genomic_DNA"/>
</dbReference>
<dbReference type="SMR" id="Q9HKS5"/>
<dbReference type="FunCoup" id="Q9HKS5">
    <property type="interactions" value="129"/>
</dbReference>
<dbReference type="STRING" id="273075.gene:9571739"/>
<dbReference type="PaxDb" id="273075-Ta0522"/>
<dbReference type="EnsemblBacteria" id="CAC11661">
    <property type="protein sequence ID" value="CAC11661"/>
    <property type="gene ID" value="CAC11661"/>
</dbReference>
<dbReference type="KEGG" id="tac:Ta0522"/>
<dbReference type="eggNOG" id="arCOG04075">
    <property type="taxonomic scope" value="Archaea"/>
</dbReference>
<dbReference type="HOGENOM" id="CLU_055352_1_0_2"/>
<dbReference type="InParanoid" id="Q9HKS5"/>
<dbReference type="OrthoDB" id="6840at2157"/>
<dbReference type="UniPathway" id="UPA00245"/>
<dbReference type="Proteomes" id="UP000001024">
    <property type="component" value="Chromosome"/>
</dbReference>
<dbReference type="GO" id="GO:0036381">
    <property type="term" value="F:pyridoxal 5'-phosphate synthase (glutamine hydrolysing) activity"/>
    <property type="evidence" value="ECO:0007669"/>
    <property type="project" value="UniProtKB-UniRule"/>
</dbReference>
<dbReference type="GO" id="GO:0006520">
    <property type="term" value="P:amino acid metabolic process"/>
    <property type="evidence" value="ECO:0007669"/>
    <property type="project" value="TreeGrafter"/>
</dbReference>
<dbReference type="GO" id="GO:0042823">
    <property type="term" value="P:pyridoxal phosphate biosynthetic process"/>
    <property type="evidence" value="ECO:0007669"/>
    <property type="project" value="UniProtKB-UniRule"/>
</dbReference>
<dbReference type="GO" id="GO:0008615">
    <property type="term" value="P:pyridoxine biosynthetic process"/>
    <property type="evidence" value="ECO:0007669"/>
    <property type="project" value="TreeGrafter"/>
</dbReference>
<dbReference type="CDD" id="cd04727">
    <property type="entry name" value="pdxS"/>
    <property type="match status" value="1"/>
</dbReference>
<dbReference type="Gene3D" id="3.20.20.70">
    <property type="entry name" value="Aldolase class I"/>
    <property type="match status" value="1"/>
</dbReference>
<dbReference type="HAMAP" id="MF_01824">
    <property type="entry name" value="PdxS"/>
    <property type="match status" value="1"/>
</dbReference>
<dbReference type="InterPro" id="IPR013785">
    <property type="entry name" value="Aldolase_TIM"/>
</dbReference>
<dbReference type="InterPro" id="IPR001852">
    <property type="entry name" value="PdxS/SNZ"/>
</dbReference>
<dbReference type="InterPro" id="IPR033755">
    <property type="entry name" value="PdxS/SNZ_N"/>
</dbReference>
<dbReference type="InterPro" id="IPR011060">
    <property type="entry name" value="RibuloseP-bd_barrel"/>
</dbReference>
<dbReference type="InterPro" id="IPR033983">
    <property type="entry name" value="Thiazole_synthase_ThiG"/>
</dbReference>
<dbReference type="NCBIfam" id="NF003215">
    <property type="entry name" value="PRK04180.1"/>
    <property type="match status" value="1"/>
</dbReference>
<dbReference type="NCBIfam" id="TIGR00343">
    <property type="entry name" value="pyridoxal 5'-phosphate synthase lyase subunit PdxS"/>
    <property type="match status" value="1"/>
</dbReference>
<dbReference type="PANTHER" id="PTHR31829">
    <property type="entry name" value="PYRIDOXAL 5'-PHOSPHATE SYNTHASE SUBUNIT SNZ1-RELATED"/>
    <property type="match status" value="1"/>
</dbReference>
<dbReference type="PANTHER" id="PTHR31829:SF0">
    <property type="entry name" value="PYRIDOXAL 5'-PHOSPHATE SYNTHASE SUBUNIT SNZ1-RELATED"/>
    <property type="match status" value="1"/>
</dbReference>
<dbReference type="Pfam" id="PF01680">
    <property type="entry name" value="SOR_SNZ"/>
    <property type="match status" value="1"/>
</dbReference>
<dbReference type="Pfam" id="PF05690">
    <property type="entry name" value="ThiG"/>
    <property type="match status" value="1"/>
</dbReference>
<dbReference type="PIRSF" id="PIRSF029271">
    <property type="entry name" value="Pdx1"/>
    <property type="match status" value="1"/>
</dbReference>
<dbReference type="SUPFAM" id="SSF51366">
    <property type="entry name" value="Ribulose-phoshate binding barrel"/>
    <property type="match status" value="1"/>
</dbReference>
<dbReference type="PROSITE" id="PS01235">
    <property type="entry name" value="PDXS_SNZ_1"/>
    <property type="match status" value="1"/>
</dbReference>
<dbReference type="PROSITE" id="PS51129">
    <property type="entry name" value="PDXS_SNZ_2"/>
    <property type="match status" value="1"/>
</dbReference>
<keyword id="KW-0456">Lyase</keyword>
<keyword id="KW-0663">Pyridoxal phosphate</keyword>
<keyword id="KW-1185">Reference proteome</keyword>
<keyword id="KW-0704">Schiff base</keyword>